<sequence>MYRELISHKIAELKKERKAIILAHNYQLGEIQDAADFVGDSLELARKAAKVDAEVIVFCGVHFMAETAAILSPEKIVLAPEPRAGCPMADMISGAELREFKSRHPGLPVVCYVNSTAEVKAESDICCTSANAVKVVESLKSDTVLFVPDQYLGAFVKERTSKKIISWPGYCPSHARIKPEDIVNLKKHYPAAKVIVHPESRPEVTALADEVLSTGQMVSYAARADVKELIVGTEIGMIYRLRKENPDKLFIPVSEQAVCANMKMTTLPKLLASLENMQAVVSVPEEIRVKAVGAVERMLRVV</sequence>
<proteinExistence type="inferred from homology"/>
<keyword id="KW-0004">4Fe-4S</keyword>
<keyword id="KW-0963">Cytoplasm</keyword>
<keyword id="KW-0408">Iron</keyword>
<keyword id="KW-0411">Iron-sulfur</keyword>
<keyword id="KW-0479">Metal-binding</keyword>
<keyword id="KW-0662">Pyridine nucleotide biosynthesis</keyword>
<keyword id="KW-0808">Transferase</keyword>
<reference key="1">
    <citation type="journal article" date="2005" name="Nat. Biotechnol.">
        <title>Genome sequence of the chlorinated compound-respiring bacterium Dehalococcoides species strain CBDB1.</title>
        <authorList>
            <person name="Kube M."/>
            <person name="Beck A."/>
            <person name="Zinder S.H."/>
            <person name="Kuhl H."/>
            <person name="Reinhardt R."/>
            <person name="Adrian L."/>
        </authorList>
    </citation>
    <scope>NUCLEOTIDE SEQUENCE [LARGE SCALE GENOMIC DNA]</scope>
    <source>
        <strain>CBDB1</strain>
    </source>
</reference>
<dbReference type="EC" id="2.5.1.72" evidence="1"/>
<dbReference type="EMBL" id="AJ965256">
    <property type="protein sequence ID" value="CAI83687.1"/>
    <property type="molecule type" value="Genomic_DNA"/>
</dbReference>
<dbReference type="RefSeq" id="WP_011310025.1">
    <property type="nucleotide sequence ID" value="NC_007356.1"/>
</dbReference>
<dbReference type="SMR" id="Q3ZW59"/>
<dbReference type="KEGG" id="deh:cbdbA1681"/>
<dbReference type="HOGENOM" id="CLU_047382_0_0_0"/>
<dbReference type="UniPathway" id="UPA00253">
    <property type="reaction ID" value="UER00327"/>
</dbReference>
<dbReference type="Proteomes" id="UP000000433">
    <property type="component" value="Chromosome"/>
</dbReference>
<dbReference type="GO" id="GO:0005737">
    <property type="term" value="C:cytoplasm"/>
    <property type="evidence" value="ECO:0007669"/>
    <property type="project" value="UniProtKB-SubCell"/>
</dbReference>
<dbReference type="GO" id="GO:0051539">
    <property type="term" value="F:4 iron, 4 sulfur cluster binding"/>
    <property type="evidence" value="ECO:0007669"/>
    <property type="project" value="UniProtKB-KW"/>
</dbReference>
<dbReference type="GO" id="GO:0046872">
    <property type="term" value="F:metal ion binding"/>
    <property type="evidence" value="ECO:0007669"/>
    <property type="project" value="UniProtKB-KW"/>
</dbReference>
<dbReference type="GO" id="GO:0008987">
    <property type="term" value="F:quinolinate synthetase A activity"/>
    <property type="evidence" value="ECO:0007669"/>
    <property type="project" value="UniProtKB-UniRule"/>
</dbReference>
<dbReference type="GO" id="GO:0034628">
    <property type="term" value="P:'de novo' NAD biosynthetic process from L-aspartate"/>
    <property type="evidence" value="ECO:0007669"/>
    <property type="project" value="TreeGrafter"/>
</dbReference>
<dbReference type="FunFam" id="3.40.50.10800:FF:000003">
    <property type="entry name" value="Quinolinate synthase A"/>
    <property type="match status" value="1"/>
</dbReference>
<dbReference type="Gene3D" id="3.40.50.10800">
    <property type="entry name" value="NadA-like"/>
    <property type="match status" value="3"/>
</dbReference>
<dbReference type="HAMAP" id="MF_00568">
    <property type="entry name" value="NadA_type2"/>
    <property type="match status" value="1"/>
</dbReference>
<dbReference type="InterPro" id="IPR003473">
    <property type="entry name" value="NadA"/>
</dbReference>
<dbReference type="InterPro" id="IPR036094">
    <property type="entry name" value="NadA_sf"/>
</dbReference>
<dbReference type="InterPro" id="IPR023066">
    <property type="entry name" value="Quinolinate_synth_type2"/>
</dbReference>
<dbReference type="NCBIfam" id="TIGR00550">
    <property type="entry name" value="nadA"/>
    <property type="match status" value="1"/>
</dbReference>
<dbReference type="NCBIfam" id="NF006878">
    <property type="entry name" value="PRK09375.1-2"/>
    <property type="match status" value="1"/>
</dbReference>
<dbReference type="NCBIfam" id="NF006879">
    <property type="entry name" value="PRK09375.1-4"/>
    <property type="match status" value="1"/>
</dbReference>
<dbReference type="PANTHER" id="PTHR30573:SF0">
    <property type="entry name" value="QUINOLINATE SYNTHASE, CHLOROPLASTIC"/>
    <property type="match status" value="1"/>
</dbReference>
<dbReference type="PANTHER" id="PTHR30573">
    <property type="entry name" value="QUINOLINATE SYNTHETASE A"/>
    <property type="match status" value="1"/>
</dbReference>
<dbReference type="Pfam" id="PF02445">
    <property type="entry name" value="NadA"/>
    <property type="match status" value="1"/>
</dbReference>
<dbReference type="SUPFAM" id="SSF142754">
    <property type="entry name" value="NadA-like"/>
    <property type="match status" value="1"/>
</dbReference>
<feature type="chain" id="PRO_1000072573" description="Quinolinate synthase">
    <location>
        <begin position="1"/>
        <end position="302"/>
    </location>
</feature>
<feature type="binding site" evidence="1">
    <location>
        <position position="24"/>
    </location>
    <ligand>
        <name>iminosuccinate</name>
        <dbReference type="ChEBI" id="CHEBI:77875"/>
    </ligand>
</feature>
<feature type="binding site" evidence="1">
    <location>
        <position position="41"/>
    </location>
    <ligand>
        <name>iminosuccinate</name>
        <dbReference type="ChEBI" id="CHEBI:77875"/>
    </ligand>
</feature>
<feature type="binding site" evidence="1">
    <location>
        <position position="86"/>
    </location>
    <ligand>
        <name>[4Fe-4S] cluster</name>
        <dbReference type="ChEBI" id="CHEBI:49883"/>
    </ligand>
</feature>
<feature type="binding site" evidence="1">
    <location>
        <begin position="112"/>
        <end position="114"/>
    </location>
    <ligand>
        <name>iminosuccinate</name>
        <dbReference type="ChEBI" id="CHEBI:77875"/>
    </ligand>
</feature>
<feature type="binding site" evidence="1">
    <location>
        <position position="129"/>
    </location>
    <ligand>
        <name>iminosuccinate</name>
        <dbReference type="ChEBI" id="CHEBI:77875"/>
    </ligand>
</feature>
<feature type="binding site" evidence="1">
    <location>
        <position position="171"/>
    </location>
    <ligand>
        <name>[4Fe-4S] cluster</name>
        <dbReference type="ChEBI" id="CHEBI:49883"/>
    </ligand>
</feature>
<feature type="binding site" evidence="1">
    <location>
        <begin position="197"/>
        <end position="199"/>
    </location>
    <ligand>
        <name>iminosuccinate</name>
        <dbReference type="ChEBI" id="CHEBI:77875"/>
    </ligand>
</feature>
<feature type="binding site" evidence="1">
    <location>
        <position position="214"/>
    </location>
    <ligand>
        <name>iminosuccinate</name>
        <dbReference type="ChEBI" id="CHEBI:77875"/>
    </ligand>
</feature>
<feature type="binding site" evidence="1">
    <location>
        <position position="259"/>
    </location>
    <ligand>
        <name>[4Fe-4S] cluster</name>
        <dbReference type="ChEBI" id="CHEBI:49883"/>
    </ligand>
</feature>
<name>NADA_DEHMC</name>
<accession>Q3ZW59</accession>
<comment type="function">
    <text evidence="1">Catalyzes the condensation of iminoaspartate with dihydroxyacetone phosphate to form quinolinate.</text>
</comment>
<comment type="catalytic activity">
    <reaction evidence="1">
        <text>iminosuccinate + dihydroxyacetone phosphate = quinolinate + phosphate + 2 H2O + H(+)</text>
        <dbReference type="Rhea" id="RHEA:25888"/>
        <dbReference type="ChEBI" id="CHEBI:15377"/>
        <dbReference type="ChEBI" id="CHEBI:15378"/>
        <dbReference type="ChEBI" id="CHEBI:29959"/>
        <dbReference type="ChEBI" id="CHEBI:43474"/>
        <dbReference type="ChEBI" id="CHEBI:57642"/>
        <dbReference type="ChEBI" id="CHEBI:77875"/>
        <dbReference type="EC" id="2.5.1.72"/>
    </reaction>
    <physiologicalReaction direction="left-to-right" evidence="1">
        <dbReference type="Rhea" id="RHEA:25889"/>
    </physiologicalReaction>
</comment>
<comment type="cofactor">
    <cofactor evidence="1">
        <name>[4Fe-4S] cluster</name>
        <dbReference type="ChEBI" id="CHEBI:49883"/>
    </cofactor>
    <text evidence="1">Binds 1 [4Fe-4S] cluster per subunit.</text>
</comment>
<comment type="pathway">
    <text evidence="1">Cofactor biosynthesis; NAD(+) biosynthesis; quinolinate from iminoaspartate: step 1/1.</text>
</comment>
<comment type="subcellular location">
    <subcellularLocation>
        <location evidence="1">Cytoplasm</location>
    </subcellularLocation>
</comment>
<comment type="similarity">
    <text evidence="1">Belongs to the quinolinate synthase family. Type 2 subfamily.</text>
</comment>
<gene>
    <name evidence="1" type="primary">nadA</name>
    <name type="ordered locus">cbdbA1681</name>
</gene>
<evidence type="ECO:0000255" key="1">
    <source>
        <dbReference type="HAMAP-Rule" id="MF_00568"/>
    </source>
</evidence>
<protein>
    <recommendedName>
        <fullName evidence="1">Quinolinate synthase</fullName>
        <ecNumber evidence="1">2.5.1.72</ecNumber>
    </recommendedName>
</protein>
<organism>
    <name type="scientific">Dehalococcoides mccartyi (strain CBDB1)</name>
    <dbReference type="NCBI Taxonomy" id="255470"/>
    <lineage>
        <taxon>Bacteria</taxon>
        <taxon>Bacillati</taxon>
        <taxon>Chloroflexota</taxon>
        <taxon>Dehalococcoidia</taxon>
        <taxon>Dehalococcoidales</taxon>
        <taxon>Dehalococcoidaceae</taxon>
        <taxon>Dehalococcoides</taxon>
    </lineage>
</organism>